<feature type="chain" id="PRO_0000453732" description="Heat shock transcription factor hsf-1">
    <location>
        <begin position="1"/>
        <end position="671"/>
    </location>
</feature>
<feature type="region of interest" description="Disordered" evidence="3">
    <location>
        <begin position="1"/>
        <end position="61"/>
    </location>
</feature>
<feature type="region of interest" description="DNA-binding domain" evidence="1">
    <location>
        <begin position="89"/>
        <end position="196"/>
    </location>
</feature>
<feature type="region of interest" description="Disordered" evidence="3">
    <location>
        <begin position="329"/>
        <end position="423"/>
    </location>
</feature>
<feature type="region of interest" description="Disordered" evidence="3">
    <location>
        <begin position="437"/>
        <end position="493"/>
    </location>
</feature>
<feature type="region of interest" description="Disordered" evidence="3">
    <location>
        <begin position="526"/>
        <end position="552"/>
    </location>
</feature>
<feature type="region of interest" description="Disordered" evidence="3">
    <location>
        <begin position="612"/>
        <end position="671"/>
    </location>
</feature>
<feature type="coiled-coil region" evidence="2">
    <location>
        <begin position="206"/>
        <end position="240"/>
    </location>
</feature>
<feature type="compositionally biased region" description="Low complexity" evidence="3">
    <location>
        <begin position="1"/>
        <end position="17"/>
    </location>
</feature>
<feature type="compositionally biased region" description="Low complexity" evidence="3">
    <location>
        <begin position="38"/>
        <end position="52"/>
    </location>
</feature>
<feature type="compositionally biased region" description="Polar residues" evidence="3">
    <location>
        <begin position="370"/>
        <end position="386"/>
    </location>
</feature>
<feature type="compositionally biased region" description="Low complexity" evidence="3">
    <location>
        <begin position="439"/>
        <end position="456"/>
    </location>
</feature>
<feature type="compositionally biased region" description="Polar residues" evidence="3">
    <location>
        <begin position="474"/>
        <end position="493"/>
    </location>
</feature>
<feature type="compositionally biased region" description="Polar residues" evidence="3">
    <location>
        <begin position="528"/>
        <end position="552"/>
    </location>
</feature>
<feature type="mutagenesis site" description="Reduces formation of nuclear stress granules, in response to heat shock. May reduce sequence-specific DNA binding. Restores normal male gonadal linker cell death on either egl-20/Wnt or bar-1/beta-catenin mutant backgrounds." evidence="8 10">
    <original>R</original>
    <variation>A</variation>
    <location>
        <position position="145"/>
    </location>
</feature>
<feature type="mutagenesis site" description="In sy441; Egg-laying defects. Eggs cultured at 25 degrees Celsius arrest development at the larval L2-L3 stages, are pale and vacuolated, but distinct from dauer larvae. Reduced life-span. Drastic reduction in induction of expression of heat shock protein hsp-16.2 in response to heat shock. Increased susceptibility to Gram-negative bacterium P.aeruginosa. Starvation increases maximum, but not median, lifespan. Inappropriate survival of male gonadal linker cell, exacerbated in a ubiquitin-conjugating enzyme let-70 mutant background. Significantly reduced expression of let-70 and ubiquitin ubq-1. Ascaroside pheromone biosynthesis is inhibited and extracts from mutants induce a significantly decreased dauer formation rate in wild-type L1 larvae." evidence="4 5 6 9 10">
    <location>
        <begin position="585"/>
        <end position="671"/>
    </location>
</feature>
<accession>G5EFT5</accession>
<accession>Q6Q4G5</accession>
<protein>
    <recommendedName>
        <fullName evidence="16">Heat shock transcription factor hsf-1</fullName>
    </recommendedName>
</protein>
<comment type="function">
    <text evidence="4 5 6 7 9 10 11 12 13 14 15">Functions as a stress-inducible and DNA-binding transcription factor, playing a central role in the transcriptional activation of the heat shock response (HSR), leading to the expression of a large class of molecular chaperones, heat shock proteins (HSPs), that protect cells from cellular insult damage (PubMed:15611166, PubMed:22265419, PubMed:29042483). Upon exposure to heat and other stress stimuli, activates gene transcription through binding to site-specific heat shock elements (HSEs) present in the promoter regions of target genes, such as the HSPs (PubMed:15611166, PubMed:22265419, PubMed:27688402, PubMed:29042483). Binds to inverted 5'-NGAAN-3' pentamer DNA sequences in HSEs (PubMed:27688402, PubMed:29042483). Involved in positive modulation of expression of heat shock protein hsp-16.2 in response to heat shock; may act in concert with homeodomain-interacting protein kinase hpk-1 (PubMed:15611166, PubMed:28198373, PubMed:29036198). In response to heat shock or starvation, required for the modulation of lifespan, and protection against aberrant protein aggregation proteotoxicity; may act in parallel with the Insulin/IGF-1-like signaling (IIS) mediated pathway (PubMed:15611166, PubMed:18331616, PubMed:28198373, PubMed:29036198). Plays a role in modulating autophagy, in response to a moderate and short-term heat shock, also known as a hormetic heat shock (PubMed:28198373). Involved in positive modulation of ascaroside pheromone biosynthesis in response to heat shock, perhaps by directly activating transcription of peroxisomal fatty acid beta-oxidation genes (PubMed:26759377). Required in modulating the response to infection by either Gram-negative or Gram-positive bacteria, perhaps acting via regulation of expression of Hsp90/daf-21 and members of the small heat shock protein (HSP20) family (PubMed:16916933, PubMed:29042483). May play a role downstream of the daf-16/FOXO and daf-2 signaling pathway in response to bacterial pathogens (PubMed:16916933). Modulates expression of multiple microRNA genes, in both heat shock-dependent and -independent manner (PubMed:28837599). Independent of heat shock, required to modulate expression of genes involved in larval development, mainly distinct from HSPs; acts in concert with putative transcription factor efl-1/E2F, which may form part of a multiprotein DRM complex (PubMed:15611166, PubMed:27688402). Independent of heat shock, involved in promoting death of the linker cell, a male-specific cell which guides the elongation of the gonad; perhaps acting by modulating expression of ubiquitin-conjugating enzyme let-70 (PubMed:26952214). Plays a role in egg-laying (PubMed:15611166).</text>
</comment>
<comment type="subunit">
    <text evidence="7 15">Forms homodimers and homotrimers (PubMed:22265419, PubMed:29042483). Component of the DHIC (ddl-1-containing hsf-1 inhibitory complex), which contains at least ddl-1, ddl-2, hsb-1 and hsf-1 (PubMed:22265419). Within the complex, interacts with ddl-1 (PubMed:22265419). Formation of the DHIC may be dependent upon the Insulin/IGF-1-like signaling (IIS) mediated pathway (PubMed:22265419).</text>
</comment>
<comment type="interaction">
    <interactant intactId="EBI-2916699">
        <id>G5EFT5</id>
    </interactant>
    <interactant intactId="EBI-323542">
        <id>O01901</id>
        <label>ddl-1</label>
    </interactant>
    <organismsDiffer>false</organismsDiffer>
    <experiments>3</experiments>
</comment>
<comment type="interaction">
    <interactant intactId="EBI-2916699">
        <id>G5EFT5</id>
    </interactant>
    <interactant intactId="EBI-2916699">
        <id>G5EFT5</id>
        <label>hsf-1</label>
    </interactant>
    <organismsDiffer>false</organismsDiffer>
    <experiments>2</experiments>
</comment>
<comment type="subcellular location">
    <subcellularLocation>
        <location evidence="8">Nucleus</location>
    </subcellularLocation>
    <subcellularLocation>
        <location evidence="7">Cytoplasm</location>
    </subcellularLocation>
    <text evidence="7 8 14 15">Localizes constitutively to the nucleus (PubMed:23107491, PubMed:29042483). Localization to the nucleus enhanced by heat shock (PubMed:22265419). Localization to nucleus inhibited by the Insulin/IGF-1-like signaling (IIS) mediated pathway (PubMed:22265419). In response to heat shock, forms nuclear stress granules (PubMed:23107491, PubMed:29036198). These structures are dependent upon either heat shock, or can be induced by treatment with sodium azide, which may act by inhibiting ATP production (PubMed:23107491). DNA binding may promote localization to stress granules (PubMed:23107491). Localization to stress granules partially overlaps with sites of active transcription (PubMed:23107491). Other stressors such as osmotic stress, heavy metals, or ethanol do not induce localization to nuclear stress granules (PubMed:23107491).</text>
</comment>
<comment type="tissue specificity">
    <text evidence="7">Expressed in intestinal cells, body wall muscle cells, and hypodermal cells, as well as many neurons in the head and tail.</text>
</comment>
<comment type="induction">
    <text evidence="4 15">Induced by heat shock.</text>
</comment>
<comment type="PTM">
    <text evidence="7 14 15">Phosphorylated.</text>
</comment>
<comment type="PTM">
    <text evidence="14">Sumoylated (PubMed:29036198). Sumoylation may inhibit transcriptional activity in response to heat shock (PubMed:29036198).</text>
</comment>
<comment type="disruption phenotype">
    <text evidence="5 6 12 15">RNAi-mediated knockdown increases susceptibility to Gram-negative bacterium P.aeruginosa in wild-type and in a daf-2 mutant background (PubMed:16916933). Abolishes both median and maximum lifespan extension caused by starvation (PubMed:18331616). Fails to prevent paralysis due to proteotoxicity under starvation conditions (PubMed:18331616). Prevents the heat shock-induced increase in lgg-1/Atg8 punctae in body-wall muscles, nerve ring neurons and proximal intestinal cells (PubMed:28198373). Accelerates death upon exposure to the Gram-negative bacterium P.aeruginosa PA14 (PubMed:29042483).</text>
</comment>
<comment type="similarity">
    <text evidence="17">Belongs to the HSF family.</text>
</comment>
<proteinExistence type="evidence at protein level"/>
<sequence length="671" mass="75012">MQPTGNQIQQNQQQQQQLIMRVPKQEVSVSGAARRYVQQAPPNRPPRQNHQNGAIGGKKSSVTIQEVPNNAYLETLNKSGNNKVDDDKLPVFLIKLWNIVEDPNLQSIVHWDDSGASFHISDPYLFGRNVLPHFFKHNNMNSMVRQLNMYGFRKMTPLSQGGLTRTESDQDHLEFSHPCFVQGRPELLSQIKRKQSARTVEDKQVNEQTQQNLEVVMAEMRAMREKAKNMEDKMNKLTKENRDMWTQMGSMRQQHARQQQYFKKLLHFLVSVMQPGLSKRVAKRGVLEIDFCAANGTAGPNSKRARMNSEEGPYKDVCDLLESLQRETQEPFSRRFTNNEGPLISEVTDEFGNSPVGRGSAQDLFGDTFGAQSSRYSDGGATSSREQSPHPIISQPQSNSAGAHGANEQKPDDMYMGSGPLTHENIHRGISALKRDYQGASPASGGPSTSSSAPSGAGAGARMAQKRAAPYKNATRQMAQPQQDYSGGFVNNYSGFMPSDPSMIPYQPSHQYLQPHQKLMAIEDQHHPTTSTSSTNADPHQNLYSPTLGLSPSFDRQLSQELQEYFTGTDTSLESFRDLVSNHNWDDFGNNVPLDDDEEGSEDPLRQLALENAPETSNYDGAEDLLFDNEQQYPENGFDVPDPNYLPLADEEIFPHSPALRTPSPSDPNLV</sequence>
<evidence type="ECO:0000250" key="1">
    <source>
        <dbReference type="UniProtKB" id="Q00613"/>
    </source>
</evidence>
<evidence type="ECO:0000255" key="2"/>
<evidence type="ECO:0000256" key="3">
    <source>
        <dbReference type="SAM" id="MobiDB-lite"/>
    </source>
</evidence>
<evidence type="ECO:0000269" key="4">
    <source>
    </source>
</evidence>
<evidence type="ECO:0000269" key="5">
    <source>
    </source>
</evidence>
<evidence type="ECO:0000269" key="6">
    <source>
    </source>
</evidence>
<evidence type="ECO:0000269" key="7">
    <source>
    </source>
</evidence>
<evidence type="ECO:0000269" key="8">
    <source>
    </source>
</evidence>
<evidence type="ECO:0000269" key="9">
    <source>
    </source>
</evidence>
<evidence type="ECO:0000269" key="10">
    <source>
    </source>
</evidence>
<evidence type="ECO:0000269" key="11">
    <source>
    </source>
</evidence>
<evidence type="ECO:0000269" key="12">
    <source>
    </source>
</evidence>
<evidence type="ECO:0000269" key="13">
    <source>
    </source>
</evidence>
<evidence type="ECO:0000269" key="14">
    <source>
    </source>
</evidence>
<evidence type="ECO:0000269" key="15">
    <source>
    </source>
</evidence>
<evidence type="ECO:0000303" key="16">
    <source>
    </source>
</evidence>
<evidence type="ECO:0000305" key="17"/>
<evidence type="ECO:0000312" key="18">
    <source>
        <dbReference type="EMBL" id="AAS72409.1"/>
    </source>
</evidence>
<evidence type="ECO:0000312" key="19">
    <source>
        <dbReference type="Proteomes" id="UP000001940"/>
    </source>
</evidence>
<evidence type="ECO:0000312" key="20">
    <source>
        <dbReference type="WormBase" id="Y53C10A.12"/>
    </source>
</evidence>
<name>HSF1_CAEEL</name>
<gene>
    <name evidence="20" type="primary">hsf-1</name>
    <name evidence="20" type="ORF">Y53C10A.12</name>
</gene>
<reference evidence="18" key="1">
    <citation type="journal article" date="2004" name="Genetics">
        <title>The L-type cyclin CYL-1 and the heat-shock-factor HSF-1 are required for heat-shock-induced protein expression in Caenorhabditis elegans.</title>
        <authorList>
            <person name="Hajdu-Cronin Y.M."/>
            <person name="Chen W.J."/>
            <person name="Sternberg P.W."/>
        </authorList>
    </citation>
    <scope>NUCLEOTIDE SEQUENCE [MRNA]</scope>
    <scope>FUNCTION</scope>
    <scope>INDUCTION</scope>
    <scope>MUTAGENESIS OF 585-TRP--VAL-671</scope>
</reference>
<reference evidence="19" key="2">
    <citation type="journal article" date="1998" name="Science">
        <title>Genome sequence of the nematode C. elegans: a platform for investigating biology.</title>
        <authorList>
            <consortium name="The C. elegans sequencing consortium"/>
        </authorList>
    </citation>
    <scope>NUCLEOTIDE SEQUENCE [LARGE SCALE GENOMIC DNA]</scope>
    <source>
        <strain evidence="19">Bristol N2</strain>
    </source>
</reference>
<reference evidence="17" key="3">
    <citation type="journal article" date="2006" name="Proc. Natl. Acad. Sci. U.S.A.">
        <title>Heat-shock transcription factor (HSF)-1 pathway required for Caenorhabditis elegans immunity.</title>
        <authorList>
            <person name="Singh V."/>
            <person name="Aballay A."/>
        </authorList>
    </citation>
    <scope>FUNCTION</scope>
    <scope>DISRUPTION PHENOTYPE</scope>
    <scope>MUTAGENESIS OF 585-TRP--VAL-671</scope>
</reference>
<reference evidence="17" key="4">
    <citation type="journal article" date="2008" name="Aging Cell">
        <title>Dietary restriction suppresses proteotoxicity and enhances longevity by an hsf-1-dependent mechanism in Caenorhabditis elegans.</title>
        <authorList>
            <person name="Steinkraus K.A."/>
            <person name="Smith E.D."/>
            <person name="Davis C."/>
            <person name="Carr D."/>
            <person name="Pendergrass W.R."/>
            <person name="Sutphin G.L."/>
            <person name="Kennedy B.K."/>
            <person name="Kaeberlein M."/>
        </authorList>
    </citation>
    <scope>FUNCTION</scope>
    <scope>DISRUPTION PHENOTYPE</scope>
    <scope>MUTAGENESIS OF 585-TRP--VAL-671</scope>
</reference>
<reference evidence="17" key="5">
    <citation type="journal article" date="2012" name="Cell">
        <title>HSF-1 regulators DDL-1/2 link insulin-like signaling to heat-shock responses and modulation of longevity.</title>
        <authorList>
            <person name="Chiang W.C."/>
            <person name="Ching T.T."/>
            <person name="Lee H.C."/>
            <person name="Mousigian C."/>
            <person name="Hsu A.L."/>
        </authorList>
    </citation>
    <scope>FUNCTION</scope>
    <scope>SUBUNIT</scope>
    <scope>IDENTIFICATION IN THE DHIC COMPLEX</scope>
    <scope>INTERACTION WITH DDL-1</scope>
    <scope>SUBCELLULAR LOCATION</scope>
    <scope>TISSUE SPECIFICITY</scope>
    <scope>PHOSPHORYLATION</scope>
</reference>
<reference evidence="17" key="6">
    <citation type="journal article" date="2013" name="Aging Cell">
        <title>Caenorhabditis elegans HSF-1 is an essential nuclear protein that forms stress granule-like structures following heat shock.</title>
        <authorList>
            <person name="Morton E.A."/>
            <person name="Lamitina T."/>
        </authorList>
    </citation>
    <scope>SUBCELLULAR LOCATION</scope>
    <scope>MUTAGENESIS OF ARG-145</scope>
</reference>
<reference evidence="17" key="7">
    <citation type="journal article" date="2016" name="Biochem. J.">
        <title>HSF-1 is involved in regulation of ascaroside pheromone biosynthesis by heat stress in Caenorhabditis elegans.</title>
        <authorList>
            <person name="Joo H.J."/>
            <person name="Park S."/>
            <person name="Kim K.Y."/>
            <person name="Kim M.Y."/>
            <person name="Kim H."/>
            <person name="Park D."/>
            <person name="Paik Y.K."/>
        </authorList>
    </citation>
    <scope>FUNCTION</scope>
    <scope>MUTAGENESIS OF 585-TRP--VAL-671</scope>
</reference>
<reference evidence="17" key="8">
    <citation type="journal article" date="2016" name="Elife">
        <title>HSF-1 activates the ubiquitin proteasome system to promote non-apoptotic developmental cell death in C. elegans.</title>
        <authorList>
            <person name="Kinet M.J."/>
            <person name="Malin J.A."/>
            <person name="Abraham M.C."/>
            <person name="Blum E.S."/>
            <person name="Silverman M.R."/>
            <person name="Lu Y."/>
            <person name="Shaham S."/>
        </authorList>
    </citation>
    <scope>FUNCTION</scope>
    <scope>MUTAGENESIS OF ARG-145 AND 585-TRP--VAL-671</scope>
</reference>
<reference evidence="17" key="9">
    <citation type="journal article" date="2016" name="Genes Dev.">
        <title>E2F coregulates an essential HSF developmental program that is distinct from the heat-shock response.</title>
        <authorList>
            <person name="Li J."/>
            <person name="Chauve L."/>
            <person name="Phelps G."/>
            <person name="Brielmann R.M."/>
            <person name="Morimoto R.I."/>
        </authorList>
    </citation>
    <scope>FUNCTION</scope>
</reference>
<reference evidence="17" key="10">
    <citation type="journal article" date="2017" name="Nat. Commun.">
        <title>Hormetic heat stress and HSF-1 induce autophagy to improve survival and proteostasis in C. elegans.</title>
        <authorList>
            <person name="Kumsta C."/>
            <person name="Chang J.T."/>
            <person name="Schmalz J."/>
            <person name="Hansen M."/>
        </authorList>
    </citation>
    <scope>FUNCTION</scope>
    <scope>DISRUPTION PHENOTYPE</scope>
</reference>
<reference evidence="17" key="11">
    <citation type="journal article" date="2017" name="PLoS Genet.">
        <title>The homeodomain-interacting protein kinase HPK-1 preserves protein homeostasis and longevity through master regulatory control of the HSF-1 chaperone network and TORC1-restricted autophagy in Caenorhabditis elegans.</title>
        <authorList>
            <person name="Das R."/>
            <person name="Melo J.A."/>
            <person name="Thondamal M."/>
            <person name="Morton E.A."/>
            <person name="Cornwell A.B."/>
            <person name="Crick B."/>
            <person name="Kim J.H."/>
            <person name="Swartz E.W."/>
            <person name="Lamitina T."/>
            <person name="Douglas P.M."/>
            <person name="Samuelson A.V."/>
        </authorList>
    </citation>
    <scope>FUNCTION</scope>
    <scope>SUBCELLULAR LOCATION</scope>
    <scope>PHOSPHORYLATION</scope>
    <scope>SUMOYLATION</scope>
</reference>
<reference evidence="17" key="12">
    <citation type="journal article" date="2017" name="PLoS ONE">
        <title>HSF-1 is a regulator of miRNA expression in Caenorhabditis elegans.</title>
        <authorList>
            <person name="Brunquell J."/>
            <person name="Snyder A."/>
            <person name="Cheng F."/>
            <person name="Westerheide S.D."/>
        </authorList>
    </citation>
    <scope>FUNCTION</scope>
</reference>
<reference evidence="17" key="13">
    <citation type="journal article" date="2017" name="Sci. Signal.">
        <title>Olfactory experience primes the heat shock transcription factor HSF-1 to enhance the expression of molecular chaperones in C. elegans.</title>
        <authorList>
            <person name="Ooi F.K."/>
            <person name="Prahlad V."/>
        </authorList>
    </citation>
    <scope>FUNCTION</scope>
    <scope>SUBCELLULAR LOCATION</scope>
    <scope>SUBUNIT</scope>
    <scope>INDUCTION</scope>
    <scope>PHOSPHORYLATION</scope>
    <scope>DISRUPTION PHENOTYPE</scope>
</reference>
<keyword id="KW-0175">Coiled coil</keyword>
<keyword id="KW-0963">Cytoplasm</keyword>
<keyword id="KW-0238">DNA-binding</keyword>
<keyword id="KW-0539">Nucleus</keyword>
<keyword id="KW-0597">Phosphoprotein</keyword>
<keyword id="KW-1185">Reference proteome</keyword>
<keyword id="KW-0346">Stress response</keyword>
<keyword id="KW-0804">Transcription</keyword>
<keyword id="KW-0805">Transcription regulation</keyword>
<keyword id="KW-0832">Ubl conjugation</keyword>
<organism evidence="19">
    <name type="scientific">Caenorhabditis elegans</name>
    <dbReference type="NCBI Taxonomy" id="6239"/>
    <lineage>
        <taxon>Eukaryota</taxon>
        <taxon>Metazoa</taxon>
        <taxon>Ecdysozoa</taxon>
        <taxon>Nematoda</taxon>
        <taxon>Chromadorea</taxon>
        <taxon>Rhabditida</taxon>
        <taxon>Rhabditina</taxon>
        <taxon>Rhabditomorpha</taxon>
        <taxon>Rhabditoidea</taxon>
        <taxon>Rhabditidae</taxon>
        <taxon>Peloderinae</taxon>
        <taxon>Caenorhabditis</taxon>
    </lineage>
</organism>
<dbReference type="EMBL" id="AY559747">
    <property type="protein sequence ID" value="AAS72409.1"/>
    <property type="molecule type" value="mRNA"/>
</dbReference>
<dbReference type="EMBL" id="AY559748">
    <property type="protein sequence ID" value="AAS72410.1"/>
    <property type="molecule type" value="mRNA"/>
</dbReference>
<dbReference type="EMBL" id="BX284601">
    <property type="protein sequence ID" value="CAA22146.1"/>
    <property type="molecule type" value="Genomic_DNA"/>
</dbReference>
<dbReference type="PIR" id="T27125">
    <property type="entry name" value="T27125"/>
</dbReference>
<dbReference type="RefSeq" id="NP_493031.1">
    <property type="nucleotide sequence ID" value="NM_060630.7"/>
</dbReference>
<dbReference type="SMR" id="G5EFT5"/>
<dbReference type="ComplexPortal" id="CPX-4305">
    <property type="entry name" value="DHIC complex"/>
</dbReference>
<dbReference type="FunCoup" id="G5EFT5">
    <property type="interactions" value="397"/>
</dbReference>
<dbReference type="IntAct" id="G5EFT5">
    <property type="interactions" value="2"/>
</dbReference>
<dbReference type="MINT" id="G5EFT5"/>
<dbReference type="STRING" id="6239.Y53C10A.12.1"/>
<dbReference type="PaxDb" id="6239-Y53C10A.12"/>
<dbReference type="PeptideAtlas" id="G5EFT5"/>
<dbReference type="EnsemblMetazoa" id="Y53C10A.12.1">
    <property type="protein sequence ID" value="Y53C10A.12.1"/>
    <property type="gene ID" value="WBGene00002004"/>
</dbReference>
<dbReference type="EnsemblMetazoa" id="Y53C10A.12.2">
    <property type="protein sequence ID" value="Y53C10A.12.2"/>
    <property type="gene ID" value="WBGene00002004"/>
</dbReference>
<dbReference type="GeneID" id="173078"/>
<dbReference type="KEGG" id="cel:CELE_Y53C10A.12"/>
<dbReference type="AGR" id="WB:WBGene00002004"/>
<dbReference type="CTD" id="173078"/>
<dbReference type="WormBase" id="Y53C10A.12">
    <property type="protein sequence ID" value="CE22380"/>
    <property type="gene ID" value="WBGene00002004"/>
    <property type="gene designation" value="hsf-1"/>
</dbReference>
<dbReference type="eggNOG" id="KOG0627">
    <property type="taxonomic scope" value="Eukaryota"/>
</dbReference>
<dbReference type="GeneTree" id="ENSGT00940000169930"/>
<dbReference type="HOGENOM" id="CLU_026529_0_0_1"/>
<dbReference type="InParanoid" id="G5EFT5"/>
<dbReference type="OMA" id="SHPCFVQ"/>
<dbReference type="OrthoDB" id="60033at2759"/>
<dbReference type="Reactome" id="R-CEL-3371453">
    <property type="pathway name" value="Regulation of HSF1-mediated heat shock response"/>
</dbReference>
<dbReference type="Reactome" id="R-CEL-3371511">
    <property type="pathway name" value="HSF1 activation"/>
</dbReference>
<dbReference type="Reactome" id="R-CEL-3371568">
    <property type="pathway name" value="Attenuation phase"/>
</dbReference>
<dbReference type="Reactome" id="R-CEL-3371571">
    <property type="pathway name" value="HSF1-dependent transactivation"/>
</dbReference>
<dbReference type="Reactome" id="R-CEL-9841251">
    <property type="pathway name" value="Mitochondrial unfolded protein response (UPRmt)"/>
</dbReference>
<dbReference type="CD-CODE" id="9DA71F79">
    <property type="entry name" value="Stress granule"/>
</dbReference>
<dbReference type="PRO" id="PR:G5EFT5"/>
<dbReference type="Proteomes" id="UP000001940">
    <property type="component" value="Chromosome I"/>
</dbReference>
<dbReference type="Bgee" id="WBGene00002004">
    <property type="expression patterns" value="Expressed in embryo and 4 other cell types or tissues"/>
</dbReference>
<dbReference type="GO" id="GO:0000785">
    <property type="term" value="C:chromatin"/>
    <property type="evidence" value="ECO:0000315"/>
    <property type="project" value="UniProtKB"/>
</dbReference>
<dbReference type="GO" id="GO:0005737">
    <property type="term" value="C:cytoplasm"/>
    <property type="evidence" value="ECO:0000314"/>
    <property type="project" value="WormBase"/>
</dbReference>
<dbReference type="GO" id="GO:0016604">
    <property type="term" value="C:nuclear body"/>
    <property type="evidence" value="ECO:0000314"/>
    <property type="project" value="UniProtKB"/>
</dbReference>
<dbReference type="GO" id="GO:0097165">
    <property type="term" value="C:nuclear stress granule"/>
    <property type="evidence" value="ECO:0000314"/>
    <property type="project" value="WormBase"/>
</dbReference>
<dbReference type="GO" id="GO:0005634">
    <property type="term" value="C:nucleus"/>
    <property type="evidence" value="ECO:0000314"/>
    <property type="project" value="WormBase"/>
</dbReference>
<dbReference type="GO" id="GO:0071203">
    <property type="term" value="C:WASH complex"/>
    <property type="evidence" value="ECO:0000303"/>
    <property type="project" value="ComplexPortal"/>
</dbReference>
<dbReference type="GO" id="GO:0005516">
    <property type="term" value="F:calmodulin binding"/>
    <property type="evidence" value="ECO:0000353"/>
    <property type="project" value="WormBase"/>
</dbReference>
<dbReference type="GO" id="GO:0003682">
    <property type="term" value="F:chromatin binding"/>
    <property type="evidence" value="ECO:0000315"/>
    <property type="project" value="UniProtKB"/>
</dbReference>
<dbReference type="GO" id="GO:0003700">
    <property type="term" value="F:DNA-binding transcription factor activity"/>
    <property type="evidence" value="ECO:0000315"/>
    <property type="project" value="UniProtKB"/>
</dbReference>
<dbReference type="GO" id="GO:0042802">
    <property type="term" value="F:identical protein binding"/>
    <property type="evidence" value="ECO:0000353"/>
    <property type="project" value="IntAct"/>
</dbReference>
<dbReference type="GO" id="GO:1990841">
    <property type="term" value="F:promoter-specific chromatin binding"/>
    <property type="evidence" value="ECO:0000314"/>
    <property type="project" value="WormBase"/>
</dbReference>
<dbReference type="GO" id="GO:1990837">
    <property type="term" value="F:sequence-specific double-stranded DNA binding"/>
    <property type="evidence" value="ECO:0000314"/>
    <property type="project" value="WormBase"/>
</dbReference>
<dbReference type="GO" id="GO:1904070">
    <property type="term" value="P:ascaroside biosynthetic process"/>
    <property type="evidence" value="ECO:0000315"/>
    <property type="project" value="UniProtKB"/>
</dbReference>
<dbReference type="GO" id="GO:0040024">
    <property type="term" value="P:dauer larval development"/>
    <property type="evidence" value="ECO:0000316"/>
    <property type="project" value="WormBase"/>
</dbReference>
<dbReference type="GO" id="GO:0050829">
    <property type="term" value="P:defense response to Gram-negative bacterium"/>
    <property type="evidence" value="ECO:0000315"/>
    <property type="project" value="UniProtKB"/>
</dbReference>
<dbReference type="GO" id="GO:0050830">
    <property type="term" value="P:defense response to Gram-positive bacterium"/>
    <property type="evidence" value="ECO:0000315"/>
    <property type="project" value="UniProtKB"/>
</dbReference>
<dbReference type="GO" id="GO:0008340">
    <property type="term" value="P:determination of adult lifespan"/>
    <property type="evidence" value="ECO:0000315"/>
    <property type="project" value="WormBase"/>
</dbReference>
<dbReference type="GO" id="GO:0045087">
    <property type="term" value="P:innate immune response"/>
    <property type="evidence" value="ECO:0000315"/>
    <property type="project" value="WormBase"/>
</dbReference>
<dbReference type="GO" id="GO:0010629">
    <property type="term" value="P:negative regulation of gene expression"/>
    <property type="evidence" value="ECO:0000315"/>
    <property type="project" value="UniProtKB"/>
</dbReference>
<dbReference type="GO" id="GO:0002119">
    <property type="term" value="P:nematode larval development"/>
    <property type="evidence" value="ECO:0000315"/>
    <property type="project" value="WormBase"/>
</dbReference>
<dbReference type="GO" id="GO:1905911">
    <property type="term" value="P:positive regulation of dauer entry"/>
    <property type="evidence" value="ECO:0000315"/>
    <property type="project" value="UniProtKB"/>
</dbReference>
<dbReference type="GO" id="GO:0032000">
    <property type="term" value="P:positive regulation of fatty acid beta-oxidation"/>
    <property type="evidence" value="ECO:0000315"/>
    <property type="project" value="UniProtKB"/>
</dbReference>
<dbReference type="GO" id="GO:0010628">
    <property type="term" value="P:positive regulation of gene expression"/>
    <property type="evidence" value="ECO:0000315"/>
    <property type="project" value="UniProtKB"/>
</dbReference>
<dbReference type="GO" id="GO:0016239">
    <property type="term" value="P:positive regulation of macroautophagy"/>
    <property type="evidence" value="ECO:0000315"/>
    <property type="project" value="UniProtKB"/>
</dbReference>
<dbReference type="GO" id="GO:0045944">
    <property type="term" value="P:positive regulation of transcription by RNA polymerase II"/>
    <property type="evidence" value="ECO:0000315"/>
    <property type="project" value="UniProtKB"/>
</dbReference>
<dbReference type="GO" id="GO:0012501">
    <property type="term" value="P:programmed cell death"/>
    <property type="evidence" value="ECO:0000316"/>
    <property type="project" value="UniProtKB"/>
</dbReference>
<dbReference type="GO" id="GO:0010623">
    <property type="term" value="P:programmed cell death involved in cell development"/>
    <property type="evidence" value="ECO:0000315"/>
    <property type="project" value="UniProtKB"/>
</dbReference>
<dbReference type="GO" id="GO:0010468">
    <property type="term" value="P:regulation of gene expression"/>
    <property type="evidence" value="ECO:0000303"/>
    <property type="project" value="ComplexPortal"/>
</dbReference>
<dbReference type="GO" id="GO:0009408">
    <property type="term" value="P:response to heat"/>
    <property type="evidence" value="ECO:0000315"/>
    <property type="project" value="UniProtKB"/>
</dbReference>
<dbReference type="GO" id="GO:1990834">
    <property type="term" value="P:response to odorant"/>
    <property type="evidence" value="ECO:0000315"/>
    <property type="project" value="UniProtKB"/>
</dbReference>
<dbReference type="GO" id="GO:0035966">
    <property type="term" value="P:response to topologically incorrect protein"/>
    <property type="evidence" value="ECO:0000315"/>
    <property type="project" value="WormBase"/>
</dbReference>
<dbReference type="GO" id="GO:0007210">
    <property type="term" value="P:serotonin receptor signaling pathway"/>
    <property type="evidence" value="ECO:0000315"/>
    <property type="project" value="UniProtKB"/>
</dbReference>
<dbReference type="FunFam" id="1.10.10.10:FF:000027">
    <property type="entry name" value="Heat shock transcription factor 1"/>
    <property type="match status" value="1"/>
</dbReference>
<dbReference type="Gene3D" id="1.10.10.10">
    <property type="entry name" value="Winged helix-like DNA-binding domain superfamily/Winged helix DNA-binding domain"/>
    <property type="match status" value="1"/>
</dbReference>
<dbReference type="InterPro" id="IPR000232">
    <property type="entry name" value="HSF_DNA-bd"/>
</dbReference>
<dbReference type="InterPro" id="IPR036388">
    <property type="entry name" value="WH-like_DNA-bd_sf"/>
</dbReference>
<dbReference type="InterPro" id="IPR036390">
    <property type="entry name" value="WH_DNA-bd_sf"/>
</dbReference>
<dbReference type="PANTHER" id="PTHR10015:SF427">
    <property type="entry name" value="HEAT SHOCK FACTOR PROTEIN"/>
    <property type="match status" value="1"/>
</dbReference>
<dbReference type="PANTHER" id="PTHR10015">
    <property type="entry name" value="HEAT SHOCK TRANSCRIPTION FACTOR"/>
    <property type="match status" value="1"/>
</dbReference>
<dbReference type="Pfam" id="PF00447">
    <property type="entry name" value="HSF_DNA-bind"/>
    <property type="match status" value="1"/>
</dbReference>
<dbReference type="PRINTS" id="PR00056">
    <property type="entry name" value="HSFDOMAIN"/>
</dbReference>
<dbReference type="SMART" id="SM00415">
    <property type="entry name" value="HSF"/>
    <property type="match status" value="1"/>
</dbReference>
<dbReference type="SUPFAM" id="SSF46785">
    <property type="entry name" value="Winged helix' DNA-binding domain"/>
    <property type="match status" value="1"/>
</dbReference>